<dbReference type="EC" id="4.2.1.9" evidence="1"/>
<dbReference type="EMBL" id="AF130813">
    <property type="protein sequence ID" value="AAF13802.1"/>
    <property type="molecule type" value="Genomic_DNA"/>
</dbReference>
<dbReference type="SMR" id="Q9RQ52"/>
<dbReference type="STRING" id="118110.XW81_02780"/>
<dbReference type="UniPathway" id="UPA00047">
    <property type="reaction ID" value="UER00057"/>
</dbReference>
<dbReference type="UniPathway" id="UPA00049">
    <property type="reaction ID" value="UER00061"/>
</dbReference>
<dbReference type="GO" id="GO:0005829">
    <property type="term" value="C:cytosol"/>
    <property type="evidence" value="ECO:0007669"/>
    <property type="project" value="TreeGrafter"/>
</dbReference>
<dbReference type="GO" id="GO:0051537">
    <property type="term" value="F:2 iron, 2 sulfur cluster binding"/>
    <property type="evidence" value="ECO:0007669"/>
    <property type="project" value="UniProtKB-UniRule"/>
</dbReference>
<dbReference type="GO" id="GO:0004160">
    <property type="term" value="F:dihydroxy-acid dehydratase activity"/>
    <property type="evidence" value="ECO:0007669"/>
    <property type="project" value="UniProtKB-UniRule"/>
</dbReference>
<dbReference type="GO" id="GO:0000287">
    <property type="term" value="F:magnesium ion binding"/>
    <property type="evidence" value="ECO:0007669"/>
    <property type="project" value="UniProtKB-UniRule"/>
</dbReference>
<dbReference type="GO" id="GO:0009097">
    <property type="term" value="P:isoleucine biosynthetic process"/>
    <property type="evidence" value="ECO:0007669"/>
    <property type="project" value="UniProtKB-UniRule"/>
</dbReference>
<dbReference type="GO" id="GO:0009099">
    <property type="term" value="P:L-valine biosynthetic process"/>
    <property type="evidence" value="ECO:0007669"/>
    <property type="project" value="UniProtKB-UniRule"/>
</dbReference>
<dbReference type="FunFam" id="3.50.30.80:FF:000001">
    <property type="entry name" value="Dihydroxy-acid dehydratase"/>
    <property type="match status" value="1"/>
</dbReference>
<dbReference type="Gene3D" id="3.50.30.80">
    <property type="entry name" value="IlvD/EDD C-terminal domain-like"/>
    <property type="match status" value="1"/>
</dbReference>
<dbReference type="HAMAP" id="MF_00012">
    <property type="entry name" value="IlvD"/>
    <property type="match status" value="1"/>
</dbReference>
<dbReference type="InterPro" id="IPR042096">
    <property type="entry name" value="Dihydro-acid_dehy_C"/>
</dbReference>
<dbReference type="InterPro" id="IPR004404">
    <property type="entry name" value="DihydroxyA_deHydtase"/>
</dbReference>
<dbReference type="InterPro" id="IPR020558">
    <property type="entry name" value="DiOHA_6PGluconate_deHydtase_CS"/>
</dbReference>
<dbReference type="InterPro" id="IPR056740">
    <property type="entry name" value="ILV_EDD_C"/>
</dbReference>
<dbReference type="InterPro" id="IPR000581">
    <property type="entry name" value="ILV_EDD_N"/>
</dbReference>
<dbReference type="InterPro" id="IPR037237">
    <property type="entry name" value="IlvD/EDD_N"/>
</dbReference>
<dbReference type="NCBIfam" id="TIGR00110">
    <property type="entry name" value="ilvD"/>
    <property type="match status" value="1"/>
</dbReference>
<dbReference type="NCBIfam" id="NF009103">
    <property type="entry name" value="PRK12448.1"/>
    <property type="match status" value="1"/>
</dbReference>
<dbReference type="PANTHER" id="PTHR43661">
    <property type="entry name" value="D-XYLONATE DEHYDRATASE"/>
    <property type="match status" value="1"/>
</dbReference>
<dbReference type="PANTHER" id="PTHR43661:SF3">
    <property type="entry name" value="D-XYLONATE DEHYDRATASE YAGF-RELATED"/>
    <property type="match status" value="1"/>
</dbReference>
<dbReference type="Pfam" id="PF24877">
    <property type="entry name" value="ILV_EDD_C"/>
    <property type="match status" value="1"/>
</dbReference>
<dbReference type="Pfam" id="PF00920">
    <property type="entry name" value="ILVD_EDD_N"/>
    <property type="match status" value="1"/>
</dbReference>
<dbReference type="SUPFAM" id="SSF143975">
    <property type="entry name" value="IlvD/EDD N-terminal domain-like"/>
    <property type="match status" value="1"/>
</dbReference>
<dbReference type="SUPFAM" id="SSF52016">
    <property type="entry name" value="LeuD/IlvD-like"/>
    <property type="match status" value="1"/>
</dbReference>
<dbReference type="PROSITE" id="PS00886">
    <property type="entry name" value="ILVD_EDD_1"/>
    <property type="match status" value="1"/>
</dbReference>
<dbReference type="PROSITE" id="PS00887">
    <property type="entry name" value="ILVD_EDD_2"/>
    <property type="match status" value="1"/>
</dbReference>
<organism>
    <name type="scientific">Buchnera aphidicola subsp. Schlechtendalia chinensis</name>
    <dbReference type="NCBI Taxonomy" id="118110"/>
    <lineage>
        <taxon>Bacteria</taxon>
        <taxon>Pseudomonadati</taxon>
        <taxon>Pseudomonadota</taxon>
        <taxon>Gammaproteobacteria</taxon>
        <taxon>Enterobacterales</taxon>
        <taxon>Erwiniaceae</taxon>
        <taxon>Buchnera</taxon>
    </lineage>
</organism>
<keyword id="KW-0001">2Fe-2S</keyword>
<keyword id="KW-0028">Amino-acid biosynthesis</keyword>
<keyword id="KW-0100">Branched-chain amino acid biosynthesis</keyword>
<keyword id="KW-0408">Iron</keyword>
<keyword id="KW-0411">Iron-sulfur</keyword>
<keyword id="KW-0456">Lyase</keyword>
<keyword id="KW-0460">Magnesium</keyword>
<keyword id="KW-0479">Metal-binding</keyword>
<reference key="1">
    <citation type="journal article" date="1999" name="Mol. Biol. Evol.">
        <title>Sequence evolution in bacterial endosymbionts having extreme base compositions.</title>
        <authorList>
            <person name="Clark M.A."/>
            <person name="Moran N.A."/>
            <person name="Baumann P."/>
        </authorList>
    </citation>
    <scope>NUCLEOTIDE SEQUENCE [GENOMIC DNA]</scope>
</reference>
<proteinExistence type="inferred from homology"/>
<protein>
    <recommendedName>
        <fullName evidence="1">Dihydroxy-acid dehydratase</fullName>
        <shortName evidence="1">DAD</shortName>
        <ecNumber evidence="1">4.2.1.9</ecNumber>
    </recommendedName>
</protein>
<feature type="chain" id="PRO_0000103451" description="Dihydroxy-acid dehydratase">
    <location>
        <begin position="1"/>
        <end position="613"/>
    </location>
</feature>
<feature type="active site" description="Proton acceptor" evidence="1">
    <location>
        <position position="517"/>
    </location>
</feature>
<feature type="binding site" evidence="1">
    <location>
        <position position="81"/>
    </location>
    <ligand>
        <name>Mg(2+)</name>
        <dbReference type="ChEBI" id="CHEBI:18420"/>
    </ligand>
</feature>
<feature type="binding site" evidence="1">
    <location>
        <position position="122"/>
    </location>
    <ligand>
        <name>[2Fe-2S] cluster</name>
        <dbReference type="ChEBI" id="CHEBI:190135"/>
    </ligand>
</feature>
<feature type="binding site" evidence="1">
    <location>
        <position position="123"/>
    </location>
    <ligand>
        <name>Mg(2+)</name>
        <dbReference type="ChEBI" id="CHEBI:18420"/>
    </ligand>
</feature>
<feature type="binding site" description="via carbamate group" evidence="1">
    <location>
        <position position="124"/>
    </location>
    <ligand>
        <name>Mg(2+)</name>
        <dbReference type="ChEBI" id="CHEBI:18420"/>
    </ligand>
</feature>
<feature type="binding site" evidence="1">
    <location>
        <position position="195"/>
    </location>
    <ligand>
        <name>[2Fe-2S] cluster</name>
        <dbReference type="ChEBI" id="CHEBI:190135"/>
    </ligand>
</feature>
<feature type="binding site" evidence="1">
    <location>
        <position position="491"/>
    </location>
    <ligand>
        <name>Mg(2+)</name>
        <dbReference type="ChEBI" id="CHEBI:18420"/>
    </ligand>
</feature>
<feature type="modified residue" description="N6-carboxylysine" evidence="1">
    <location>
        <position position="124"/>
    </location>
</feature>
<evidence type="ECO:0000255" key="1">
    <source>
        <dbReference type="HAMAP-Rule" id="MF_00012"/>
    </source>
</evidence>
<sequence length="613" mass="66960">MPKYRSSTTTQGRNMAGARALWKATGMTDSDFNKPIIAVVNSFTEFVPGHIHLKELGTLVSSIIKLEGGVAKEFNTIAIDDGIAMGHSGMLYSLPSRELIADSIEYMINAHCADAMICISNCDKITPGMLMAALRLNIPCVFVSGGPMESGRIVVDGKEIKINLVDAIVYGANPNYSDALASRIENCACPTCGSCSGLFTANSMNCLTEALGLSLPGNGTLLATHIDRKKLFIDSGKLIVKITKEYYEDNNTSFLPRSIASRESFLNAMSLDISTGGSTNTILHLLAMAQEGQVDFKMSDIDLLSRKIPNLCKIAPNSDVYHMEDFHRAGGVIGLLAELNRVSLLNNNVKNILGLSLDVVLNKYDILKTKNQDVIEMFHAGPLGNKTSIPFTQSYRWKSLDKDRKKGCIRSYENAFSYDGGLAILYGNIAKNGCVVKTAGVKKGNLIFEGFAIVFESQEEALKAILENKVKKGHVVVIRYEGPKGGPGMQEMLYPTTYLKSMNLDEHCALITDGRFSGGTSGLSIGHISPEAANKGNIALIRNNDVININIPNRTINLDITNDEFLNRMHNEIQRGKSSYTPQFRKRFVSSALKMYALFATSADKGAVRKIQY</sequence>
<accession>Q9RQ52</accession>
<gene>
    <name evidence="1" type="primary">ilvD</name>
</gene>
<comment type="function">
    <text evidence="1">Functions in the biosynthesis of branched-chain amino acids. Catalyzes the dehydration of (2R,3R)-2,3-dihydroxy-3-methylpentanoate (2,3-dihydroxy-3-methylvalerate) into 2-oxo-3-methylpentanoate (2-oxo-3-methylvalerate) and of (2R)-2,3-dihydroxy-3-methylbutanoate (2,3-dihydroxyisovalerate) into 2-oxo-3-methylbutanoate (2-oxoisovalerate), the penultimate precursor to L-isoleucine and L-valine, respectively.</text>
</comment>
<comment type="catalytic activity">
    <reaction evidence="1">
        <text>(2R)-2,3-dihydroxy-3-methylbutanoate = 3-methyl-2-oxobutanoate + H2O</text>
        <dbReference type="Rhea" id="RHEA:24809"/>
        <dbReference type="ChEBI" id="CHEBI:11851"/>
        <dbReference type="ChEBI" id="CHEBI:15377"/>
        <dbReference type="ChEBI" id="CHEBI:49072"/>
        <dbReference type="EC" id="4.2.1.9"/>
    </reaction>
    <physiologicalReaction direction="left-to-right" evidence="1">
        <dbReference type="Rhea" id="RHEA:24810"/>
    </physiologicalReaction>
</comment>
<comment type="catalytic activity">
    <reaction evidence="1">
        <text>(2R,3R)-2,3-dihydroxy-3-methylpentanoate = (S)-3-methyl-2-oxopentanoate + H2O</text>
        <dbReference type="Rhea" id="RHEA:27694"/>
        <dbReference type="ChEBI" id="CHEBI:15377"/>
        <dbReference type="ChEBI" id="CHEBI:35146"/>
        <dbReference type="ChEBI" id="CHEBI:49258"/>
        <dbReference type="EC" id="4.2.1.9"/>
    </reaction>
    <physiologicalReaction direction="left-to-right" evidence="1">
        <dbReference type="Rhea" id="RHEA:27695"/>
    </physiologicalReaction>
</comment>
<comment type="cofactor">
    <cofactor evidence="1">
        <name>[2Fe-2S] cluster</name>
        <dbReference type="ChEBI" id="CHEBI:190135"/>
    </cofactor>
    <text evidence="1">Binds 1 [2Fe-2S] cluster per subunit. This cluster acts as a Lewis acid cofactor.</text>
</comment>
<comment type="cofactor">
    <cofactor evidence="1">
        <name>Mg(2+)</name>
        <dbReference type="ChEBI" id="CHEBI:18420"/>
    </cofactor>
</comment>
<comment type="pathway">
    <text evidence="1">Amino-acid biosynthesis; L-isoleucine biosynthesis; L-isoleucine from 2-oxobutanoate: step 3/4.</text>
</comment>
<comment type="pathway">
    <text evidence="1">Amino-acid biosynthesis; L-valine biosynthesis; L-valine from pyruvate: step 3/4.</text>
</comment>
<comment type="subunit">
    <text evidence="1">Homodimer.</text>
</comment>
<comment type="similarity">
    <text evidence="1">Belongs to the IlvD/Edd family.</text>
</comment>
<name>ILVD_BUCSC</name>